<name>Y2399_VIBCM</name>
<proteinExistence type="inferred from homology"/>
<reference key="1">
    <citation type="journal article" date="2008" name="PLoS ONE">
        <title>A recalibrated molecular clock and independent origins for the cholera pandemic clones.</title>
        <authorList>
            <person name="Feng L."/>
            <person name="Reeves P.R."/>
            <person name="Lan R."/>
            <person name="Ren Y."/>
            <person name="Gao C."/>
            <person name="Zhou Z."/>
            <person name="Ren Y."/>
            <person name="Cheng J."/>
            <person name="Wang W."/>
            <person name="Wang J."/>
            <person name="Qian W."/>
            <person name="Li D."/>
            <person name="Wang L."/>
        </authorList>
    </citation>
    <scope>NUCLEOTIDE SEQUENCE [LARGE SCALE GENOMIC DNA]</scope>
    <source>
        <strain>M66-2</strain>
    </source>
</reference>
<organism>
    <name type="scientific">Vibrio cholerae serotype O1 (strain M66-2)</name>
    <dbReference type="NCBI Taxonomy" id="579112"/>
    <lineage>
        <taxon>Bacteria</taxon>
        <taxon>Pseudomonadati</taxon>
        <taxon>Pseudomonadota</taxon>
        <taxon>Gammaproteobacteria</taxon>
        <taxon>Vibrionales</taxon>
        <taxon>Vibrionaceae</taxon>
        <taxon>Vibrio</taxon>
    </lineage>
</organism>
<protein>
    <recommendedName>
        <fullName evidence="1">UPF0149 protein VCM66_2399</fullName>
    </recommendedName>
</protein>
<accession>C3LR19</accession>
<sequence length="191" mass="20579">MSKNRLPAYPALANELRSASLGINPAELQGLLTGMLSGGLSLNDKSWQALVFDYTNDGMGWPIGALASAEQILLAMSAQLVDTDFELSLLLPEGEGEEALFELADAVAEWINHFISGLGLSGANLKHASVEAKEALEDLEEMSKLGIDEEDDLAEQAELLEQVIEHIKACVLVLHAEFGVKPEQDTKPTVH</sequence>
<gene>
    <name type="ordered locus">VCM66_2399</name>
</gene>
<dbReference type="EMBL" id="CP001233">
    <property type="protein sequence ID" value="ACP06697.1"/>
    <property type="molecule type" value="Genomic_DNA"/>
</dbReference>
<dbReference type="RefSeq" id="WP_000042175.1">
    <property type="nucleotide sequence ID" value="NC_012578.1"/>
</dbReference>
<dbReference type="SMR" id="C3LR19"/>
<dbReference type="KEGG" id="vcm:VCM66_2399"/>
<dbReference type="HOGENOM" id="CLU_085336_1_0_6"/>
<dbReference type="Proteomes" id="UP000001217">
    <property type="component" value="Chromosome I"/>
</dbReference>
<dbReference type="GO" id="GO:0005829">
    <property type="term" value="C:cytosol"/>
    <property type="evidence" value="ECO:0007669"/>
    <property type="project" value="TreeGrafter"/>
</dbReference>
<dbReference type="FunFam" id="1.20.120.740:FF:000004">
    <property type="entry name" value="UPF0149 protein VC_2476"/>
    <property type="match status" value="1"/>
</dbReference>
<dbReference type="Gene3D" id="1.20.120.740">
    <property type="entry name" value="YgfB uncharacterised protein family UPF0149, PF03695"/>
    <property type="match status" value="1"/>
</dbReference>
<dbReference type="HAMAP" id="MF_00346">
    <property type="entry name" value="UPF0149"/>
    <property type="match status" value="1"/>
</dbReference>
<dbReference type="InterPro" id="IPR011978">
    <property type="entry name" value="YgfB-like"/>
</dbReference>
<dbReference type="InterPro" id="IPR036255">
    <property type="entry name" value="YgfB-like_sf"/>
</dbReference>
<dbReference type="NCBIfam" id="NF002477">
    <property type="entry name" value="PRK01736.1"/>
    <property type="match status" value="1"/>
</dbReference>
<dbReference type="NCBIfam" id="TIGR02292">
    <property type="entry name" value="ygfB_yecA"/>
    <property type="match status" value="1"/>
</dbReference>
<dbReference type="PANTHER" id="PTHR37528">
    <property type="entry name" value="UPF0149 PROTEIN YGFB"/>
    <property type="match status" value="1"/>
</dbReference>
<dbReference type="PANTHER" id="PTHR37528:SF1">
    <property type="entry name" value="UPF0149 PROTEIN YGFB"/>
    <property type="match status" value="1"/>
</dbReference>
<dbReference type="Pfam" id="PF03695">
    <property type="entry name" value="UPF0149"/>
    <property type="match status" value="1"/>
</dbReference>
<dbReference type="SUPFAM" id="SSF101327">
    <property type="entry name" value="YgfB-like"/>
    <property type="match status" value="1"/>
</dbReference>
<feature type="chain" id="PRO_1000133399" description="UPF0149 protein VCM66_2399">
    <location>
        <begin position="1"/>
        <end position="191"/>
    </location>
</feature>
<comment type="similarity">
    <text evidence="1">Belongs to the UPF0149 family.</text>
</comment>
<evidence type="ECO:0000255" key="1">
    <source>
        <dbReference type="HAMAP-Rule" id="MF_00346"/>
    </source>
</evidence>